<gene>
    <name evidence="1" type="primary">metK</name>
    <name type="ordered locus">Sala_3139</name>
</gene>
<evidence type="ECO:0000255" key="1">
    <source>
        <dbReference type="HAMAP-Rule" id="MF_00086"/>
    </source>
</evidence>
<comment type="function">
    <text evidence="1">Catalyzes the formation of S-adenosylmethionine (AdoMet) from methionine and ATP. The overall synthetic reaction is composed of two sequential steps, AdoMet formation and the subsequent tripolyphosphate hydrolysis which occurs prior to release of AdoMet from the enzyme.</text>
</comment>
<comment type="catalytic activity">
    <reaction evidence="1">
        <text>L-methionine + ATP + H2O = S-adenosyl-L-methionine + phosphate + diphosphate</text>
        <dbReference type="Rhea" id="RHEA:21080"/>
        <dbReference type="ChEBI" id="CHEBI:15377"/>
        <dbReference type="ChEBI" id="CHEBI:30616"/>
        <dbReference type="ChEBI" id="CHEBI:33019"/>
        <dbReference type="ChEBI" id="CHEBI:43474"/>
        <dbReference type="ChEBI" id="CHEBI:57844"/>
        <dbReference type="ChEBI" id="CHEBI:59789"/>
        <dbReference type="EC" id="2.5.1.6"/>
    </reaction>
</comment>
<comment type="cofactor">
    <cofactor evidence="1">
        <name>Mg(2+)</name>
        <dbReference type="ChEBI" id="CHEBI:18420"/>
    </cofactor>
    <text evidence="1">Binds 2 divalent ions per subunit.</text>
</comment>
<comment type="cofactor">
    <cofactor evidence="1">
        <name>K(+)</name>
        <dbReference type="ChEBI" id="CHEBI:29103"/>
    </cofactor>
    <text evidence="1">Binds 1 potassium ion per subunit.</text>
</comment>
<comment type="pathway">
    <text evidence="1">Amino-acid biosynthesis; S-adenosyl-L-methionine biosynthesis; S-adenosyl-L-methionine from L-methionine: step 1/1.</text>
</comment>
<comment type="subunit">
    <text evidence="1">Homotetramer; dimer of dimers.</text>
</comment>
<comment type="subcellular location">
    <subcellularLocation>
        <location evidence="1">Cytoplasm</location>
    </subcellularLocation>
</comment>
<comment type="similarity">
    <text evidence="1">Belongs to the AdoMet synthase family.</text>
</comment>
<accession>Q1GND0</accession>
<keyword id="KW-0067">ATP-binding</keyword>
<keyword id="KW-0963">Cytoplasm</keyword>
<keyword id="KW-0460">Magnesium</keyword>
<keyword id="KW-0479">Metal-binding</keyword>
<keyword id="KW-0547">Nucleotide-binding</keyword>
<keyword id="KW-0554">One-carbon metabolism</keyword>
<keyword id="KW-0630">Potassium</keyword>
<keyword id="KW-1185">Reference proteome</keyword>
<keyword id="KW-0808">Transferase</keyword>
<dbReference type="EC" id="2.5.1.6" evidence="1"/>
<dbReference type="EMBL" id="CP000356">
    <property type="protein sequence ID" value="ABF54842.1"/>
    <property type="molecule type" value="Genomic_DNA"/>
</dbReference>
<dbReference type="RefSeq" id="WP_011543404.1">
    <property type="nucleotide sequence ID" value="NC_008048.1"/>
</dbReference>
<dbReference type="SMR" id="Q1GND0"/>
<dbReference type="STRING" id="317655.Sala_3139"/>
<dbReference type="KEGG" id="sal:Sala_3139"/>
<dbReference type="eggNOG" id="COG0192">
    <property type="taxonomic scope" value="Bacteria"/>
</dbReference>
<dbReference type="HOGENOM" id="CLU_041802_1_1_5"/>
<dbReference type="OrthoDB" id="9801686at2"/>
<dbReference type="UniPathway" id="UPA00315">
    <property type="reaction ID" value="UER00080"/>
</dbReference>
<dbReference type="Proteomes" id="UP000006578">
    <property type="component" value="Chromosome"/>
</dbReference>
<dbReference type="GO" id="GO:0005737">
    <property type="term" value="C:cytoplasm"/>
    <property type="evidence" value="ECO:0007669"/>
    <property type="project" value="UniProtKB-SubCell"/>
</dbReference>
<dbReference type="GO" id="GO:0005524">
    <property type="term" value="F:ATP binding"/>
    <property type="evidence" value="ECO:0007669"/>
    <property type="project" value="UniProtKB-UniRule"/>
</dbReference>
<dbReference type="GO" id="GO:0000287">
    <property type="term" value="F:magnesium ion binding"/>
    <property type="evidence" value="ECO:0007669"/>
    <property type="project" value="UniProtKB-UniRule"/>
</dbReference>
<dbReference type="GO" id="GO:0004478">
    <property type="term" value="F:methionine adenosyltransferase activity"/>
    <property type="evidence" value="ECO:0007669"/>
    <property type="project" value="UniProtKB-UniRule"/>
</dbReference>
<dbReference type="GO" id="GO:0006730">
    <property type="term" value="P:one-carbon metabolic process"/>
    <property type="evidence" value="ECO:0007669"/>
    <property type="project" value="UniProtKB-KW"/>
</dbReference>
<dbReference type="GO" id="GO:0006556">
    <property type="term" value="P:S-adenosylmethionine biosynthetic process"/>
    <property type="evidence" value="ECO:0007669"/>
    <property type="project" value="UniProtKB-UniRule"/>
</dbReference>
<dbReference type="CDD" id="cd18079">
    <property type="entry name" value="S-AdoMet_synt"/>
    <property type="match status" value="1"/>
</dbReference>
<dbReference type="Gene3D" id="3.30.300.10">
    <property type="match status" value="3"/>
</dbReference>
<dbReference type="HAMAP" id="MF_00086">
    <property type="entry name" value="S_AdoMet_synth1"/>
    <property type="match status" value="1"/>
</dbReference>
<dbReference type="InterPro" id="IPR022631">
    <property type="entry name" value="ADOMET_SYNTHASE_CS"/>
</dbReference>
<dbReference type="InterPro" id="IPR022630">
    <property type="entry name" value="S-AdoMet_synt_C"/>
</dbReference>
<dbReference type="InterPro" id="IPR022629">
    <property type="entry name" value="S-AdoMet_synt_central"/>
</dbReference>
<dbReference type="InterPro" id="IPR022628">
    <property type="entry name" value="S-AdoMet_synt_N"/>
</dbReference>
<dbReference type="InterPro" id="IPR002133">
    <property type="entry name" value="S-AdoMet_synthetase"/>
</dbReference>
<dbReference type="InterPro" id="IPR022636">
    <property type="entry name" value="S-AdoMet_synthetase_sfam"/>
</dbReference>
<dbReference type="NCBIfam" id="TIGR01034">
    <property type="entry name" value="metK"/>
    <property type="match status" value="1"/>
</dbReference>
<dbReference type="PANTHER" id="PTHR11964">
    <property type="entry name" value="S-ADENOSYLMETHIONINE SYNTHETASE"/>
    <property type="match status" value="1"/>
</dbReference>
<dbReference type="Pfam" id="PF02773">
    <property type="entry name" value="S-AdoMet_synt_C"/>
    <property type="match status" value="1"/>
</dbReference>
<dbReference type="Pfam" id="PF02772">
    <property type="entry name" value="S-AdoMet_synt_M"/>
    <property type="match status" value="1"/>
</dbReference>
<dbReference type="Pfam" id="PF00438">
    <property type="entry name" value="S-AdoMet_synt_N"/>
    <property type="match status" value="1"/>
</dbReference>
<dbReference type="PIRSF" id="PIRSF000497">
    <property type="entry name" value="MAT"/>
    <property type="match status" value="1"/>
</dbReference>
<dbReference type="SUPFAM" id="SSF55973">
    <property type="entry name" value="S-adenosylmethionine synthetase"/>
    <property type="match status" value="3"/>
</dbReference>
<dbReference type="PROSITE" id="PS00376">
    <property type="entry name" value="ADOMET_SYNTHASE_1"/>
    <property type="match status" value="1"/>
</dbReference>
<dbReference type="PROSITE" id="PS00377">
    <property type="entry name" value="ADOMET_SYNTHASE_2"/>
    <property type="match status" value="1"/>
</dbReference>
<name>METK_SPHAL</name>
<reference key="1">
    <citation type="journal article" date="2009" name="Proc. Natl. Acad. Sci. U.S.A.">
        <title>The genomic basis of trophic strategy in marine bacteria.</title>
        <authorList>
            <person name="Lauro F.M."/>
            <person name="McDougald D."/>
            <person name="Thomas T."/>
            <person name="Williams T.J."/>
            <person name="Egan S."/>
            <person name="Rice S."/>
            <person name="DeMaere M.Z."/>
            <person name="Ting L."/>
            <person name="Ertan H."/>
            <person name="Johnson J."/>
            <person name="Ferriera S."/>
            <person name="Lapidus A."/>
            <person name="Anderson I."/>
            <person name="Kyrpides N."/>
            <person name="Munk A.C."/>
            <person name="Detter C."/>
            <person name="Han C.S."/>
            <person name="Brown M.V."/>
            <person name="Robb F.T."/>
            <person name="Kjelleberg S."/>
            <person name="Cavicchioli R."/>
        </authorList>
    </citation>
    <scope>NUCLEOTIDE SEQUENCE [LARGE SCALE GENOMIC DNA]</scope>
    <source>
        <strain>DSM 13593 / LMG 18877 / RB2256</strain>
    </source>
</reference>
<sequence length="406" mass="44100">MRNSFLFTSESVSEGHPDKVADQISDSIVDLFLAKDPEARVACETLTTTQLVVLAGEIRCKGVFEDGEWAPGALDEIEATVRRTVREIGYEQAGFHWNRFRFENNLHGQSPQIAQGVDEGAGKDEGAGDQGIMFGYASDETPDFMPATLDYSHKILERMASDRKAGIAPFLEPDAKSQVTLRYANERPVEATAIVVSTQHAPGYYFHNGEGDEAKYTELRKYVLGVIADVLPAELLTANTVYHINPTGRFEIGGPDGDAGLTGRKIIVDTYGGASPHGGGAFSGKDPTKVDRSAAYITRYLAKNIVAAGLARRCTIQLSYAIGVAEPLSIYVDLHGTGTVDEGRIEAVLPQLVRLTPKGIRTHLGLNKPIYRQTAAYGHFGRQADGDAFPWERTDLVDKLKAALAV</sequence>
<organism>
    <name type="scientific">Sphingopyxis alaskensis (strain DSM 13593 / LMG 18877 / RB2256)</name>
    <name type="common">Sphingomonas alaskensis</name>
    <dbReference type="NCBI Taxonomy" id="317655"/>
    <lineage>
        <taxon>Bacteria</taxon>
        <taxon>Pseudomonadati</taxon>
        <taxon>Pseudomonadota</taxon>
        <taxon>Alphaproteobacteria</taxon>
        <taxon>Sphingomonadales</taxon>
        <taxon>Sphingomonadaceae</taxon>
        <taxon>Sphingopyxis</taxon>
    </lineage>
</organism>
<protein>
    <recommendedName>
        <fullName evidence="1">S-adenosylmethionine synthase</fullName>
        <shortName evidence="1">AdoMet synthase</shortName>
        <ecNumber evidence="1">2.5.1.6</ecNumber>
    </recommendedName>
    <alternativeName>
        <fullName evidence="1">MAT</fullName>
    </alternativeName>
    <alternativeName>
        <fullName evidence="1">Methionine adenosyltransferase</fullName>
    </alternativeName>
</protein>
<feature type="chain" id="PRO_0000302984" description="S-adenosylmethionine synthase">
    <location>
        <begin position="1"/>
        <end position="406"/>
    </location>
</feature>
<feature type="region of interest" description="Flexible loop" evidence="1">
    <location>
        <begin position="109"/>
        <end position="119"/>
    </location>
</feature>
<feature type="binding site" description="in other chain" evidence="1">
    <location>
        <position position="16"/>
    </location>
    <ligand>
        <name>ATP</name>
        <dbReference type="ChEBI" id="CHEBI:30616"/>
        <note>ligand shared between two neighboring subunits</note>
    </ligand>
</feature>
<feature type="binding site" evidence="1">
    <location>
        <position position="18"/>
    </location>
    <ligand>
        <name>Mg(2+)</name>
        <dbReference type="ChEBI" id="CHEBI:18420"/>
    </ligand>
</feature>
<feature type="binding site" evidence="1">
    <location>
        <position position="44"/>
    </location>
    <ligand>
        <name>K(+)</name>
        <dbReference type="ChEBI" id="CHEBI:29103"/>
    </ligand>
</feature>
<feature type="binding site" description="in other chain" evidence="1">
    <location>
        <position position="57"/>
    </location>
    <ligand>
        <name>L-methionine</name>
        <dbReference type="ChEBI" id="CHEBI:57844"/>
        <note>ligand shared between two neighboring subunits</note>
    </ligand>
</feature>
<feature type="binding site" description="in other chain" evidence="1">
    <location>
        <position position="109"/>
    </location>
    <ligand>
        <name>L-methionine</name>
        <dbReference type="ChEBI" id="CHEBI:57844"/>
        <note>ligand shared between two neighboring subunits</note>
    </ligand>
</feature>
<feature type="binding site" description="in other chain" evidence="1">
    <location>
        <begin position="174"/>
        <end position="176"/>
    </location>
    <ligand>
        <name>ATP</name>
        <dbReference type="ChEBI" id="CHEBI:30616"/>
        <note>ligand shared between two neighboring subunits</note>
    </ligand>
</feature>
<feature type="binding site" description="in other chain" evidence="1">
    <location>
        <begin position="249"/>
        <end position="250"/>
    </location>
    <ligand>
        <name>ATP</name>
        <dbReference type="ChEBI" id="CHEBI:30616"/>
        <note>ligand shared between two neighboring subunits</note>
    </ligand>
</feature>
<feature type="binding site" evidence="1">
    <location>
        <position position="258"/>
    </location>
    <ligand>
        <name>ATP</name>
        <dbReference type="ChEBI" id="CHEBI:30616"/>
        <note>ligand shared between two neighboring subunits</note>
    </ligand>
</feature>
<feature type="binding site" evidence="1">
    <location>
        <position position="258"/>
    </location>
    <ligand>
        <name>L-methionine</name>
        <dbReference type="ChEBI" id="CHEBI:57844"/>
        <note>ligand shared between two neighboring subunits</note>
    </ligand>
</feature>
<feature type="binding site" description="in other chain" evidence="1">
    <location>
        <begin position="264"/>
        <end position="265"/>
    </location>
    <ligand>
        <name>ATP</name>
        <dbReference type="ChEBI" id="CHEBI:30616"/>
        <note>ligand shared between two neighboring subunits</note>
    </ligand>
</feature>
<feature type="binding site" evidence="1">
    <location>
        <position position="281"/>
    </location>
    <ligand>
        <name>ATP</name>
        <dbReference type="ChEBI" id="CHEBI:30616"/>
        <note>ligand shared between two neighboring subunits</note>
    </ligand>
</feature>
<feature type="binding site" evidence="1">
    <location>
        <position position="285"/>
    </location>
    <ligand>
        <name>ATP</name>
        <dbReference type="ChEBI" id="CHEBI:30616"/>
        <note>ligand shared between two neighboring subunits</note>
    </ligand>
</feature>
<feature type="binding site" description="in other chain" evidence="1">
    <location>
        <position position="289"/>
    </location>
    <ligand>
        <name>L-methionine</name>
        <dbReference type="ChEBI" id="CHEBI:57844"/>
        <note>ligand shared between two neighboring subunits</note>
    </ligand>
</feature>
<proteinExistence type="inferred from homology"/>